<organism>
    <name type="scientific">Homo sapiens</name>
    <name type="common">Human</name>
    <dbReference type="NCBI Taxonomy" id="9606"/>
    <lineage>
        <taxon>Eukaryota</taxon>
        <taxon>Metazoa</taxon>
        <taxon>Chordata</taxon>
        <taxon>Craniata</taxon>
        <taxon>Vertebrata</taxon>
        <taxon>Euteleostomi</taxon>
        <taxon>Mammalia</taxon>
        <taxon>Eutheria</taxon>
        <taxon>Euarchontoglires</taxon>
        <taxon>Primates</taxon>
        <taxon>Haplorrhini</taxon>
        <taxon>Catarrhini</taxon>
        <taxon>Hominidae</taxon>
        <taxon>Homo</taxon>
    </lineage>
</organism>
<reference key="1">
    <citation type="submission" date="2004-06" db="EMBL/GenBank/DDBJ databases">
        <title>Gene expression profiling reveals novel genes for improved risk classification and outcome prediction in pediatric acute lymphoblastic leukemia: identification, validation, and cloning of OPAL1.</title>
        <authorList>
            <person name="Helman P."/>
            <person name="Veroff R.L."/>
            <person name="Shuster J."/>
            <person name="Kang H."/>
            <person name="Mosquera-Caro M.P."/>
            <person name="Potter J.W."/>
            <person name="Harvey R.C."/>
            <person name="Martin S.B."/>
            <person name="Davidson G.S."/>
            <person name="Andries E."/>
            <person name="Atlas S.W."/>
            <person name="Chen I.-M."/>
            <person name="Wilson C.S."/>
            <person name="Ar K."/>
            <person name="Xu Y."/>
            <person name="Murphy M."/>
            <person name="Schultz F.A."/>
            <person name="Bedrick E."/>
            <person name="Carroll A.J."/>
            <person name="Camitta B."/>
            <person name="Willman C.L."/>
        </authorList>
    </citation>
    <scope>NUCLEOTIDE SEQUENCE [MRNA] (ISOFORM 1)</scope>
    <source>
        <tissue>B-cell lymphoma</tissue>
    </source>
</reference>
<reference key="2">
    <citation type="journal article" date="2004" name="Nat. Genet.">
        <title>Complete sequencing and characterization of 21,243 full-length human cDNAs.</title>
        <authorList>
            <person name="Ota T."/>
            <person name="Suzuki Y."/>
            <person name="Nishikawa T."/>
            <person name="Otsuki T."/>
            <person name="Sugiyama T."/>
            <person name="Irie R."/>
            <person name="Wakamatsu A."/>
            <person name="Hayashi K."/>
            <person name="Sato H."/>
            <person name="Nagai K."/>
            <person name="Kimura K."/>
            <person name="Makita H."/>
            <person name="Sekine M."/>
            <person name="Obayashi M."/>
            <person name="Nishi T."/>
            <person name="Shibahara T."/>
            <person name="Tanaka T."/>
            <person name="Ishii S."/>
            <person name="Yamamoto J."/>
            <person name="Saito K."/>
            <person name="Kawai Y."/>
            <person name="Isono Y."/>
            <person name="Nakamura Y."/>
            <person name="Nagahari K."/>
            <person name="Murakami K."/>
            <person name="Yasuda T."/>
            <person name="Iwayanagi T."/>
            <person name="Wagatsuma M."/>
            <person name="Shiratori A."/>
            <person name="Sudo H."/>
            <person name="Hosoiri T."/>
            <person name="Kaku Y."/>
            <person name="Kodaira H."/>
            <person name="Kondo H."/>
            <person name="Sugawara M."/>
            <person name="Takahashi M."/>
            <person name="Kanda K."/>
            <person name="Yokoi T."/>
            <person name="Furuya T."/>
            <person name="Kikkawa E."/>
            <person name="Omura Y."/>
            <person name="Abe K."/>
            <person name="Kamihara K."/>
            <person name="Katsuta N."/>
            <person name="Sato K."/>
            <person name="Tanikawa M."/>
            <person name="Yamazaki M."/>
            <person name="Ninomiya K."/>
            <person name="Ishibashi T."/>
            <person name="Yamashita H."/>
            <person name="Murakawa K."/>
            <person name="Fujimori K."/>
            <person name="Tanai H."/>
            <person name="Kimata M."/>
            <person name="Watanabe M."/>
            <person name="Hiraoka S."/>
            <person name="Chiba Y."/>
            <person name="Ishida S."/>
            <person name="Ono Y."/>
            <person name="Takiguchi S."/>
            <person name="Watanabe S."/>
            <person name="Yosida M."/>
            <person name="Hotuta T."/>
            <person name="Kusano J."/>
            <person name="Kanehori K."/>
            <person name="Takahashi-Fujii A."/>
            <person name="Hara H."/>
            <person name="Tanase T.-O."/>
            <person name="Nomura Y."/>
            <person name="Togiya S."/>
            <person name="Komai F."/>
            <person name="Hara R."/>
            <person name="Takeuchi K."/>
            <person name="Arita M."/>
            <person name="Imose N."/>
            <person name="Musashino K."/>
            <person name="Yuuki H."/>
            <person name="Oshima A."/>
            <person name="Sasaki N."/>
            <person name="Aotsuka S."/>
            <person name="Yoshikawa Y."/>
            <person name="Matsunawa H."/>
            <person name="Ichihara T."/>
            <person name="Shiohata N."/>
            <person name="Sano S."/>
            <person name="Moriya S."/>
            <person name="Momiyama H."/>
            <person name="Satoh N."/>
            <person name="Takami S."/>
            <person name="Terashima Y."/>
            <person name="Suzuki O."/>
            <person name="Nakagawa S."/>
            <person name="Senoh A."/>
            <person name="Mizoguchi H."/>
            <person name="Goto Y."/>
            <person name="Shimizu F."/>
            <person name="Wakebe H."/>
            <person name="Hishigaki H."/>
            <person name="Watanabe T."/>
            <person name="Sugiyama A."/>
            <person name="Takemoto M."/>
            <person name="Kawakami B."/>
            <person name="Yamazaki M."/>
            <person name="Watanabe K."/>
            <person name="Kumagai A."/>
            <person name="Itakura S."/>
            <person name="Fukuzumi Y."/>
            <person name="Fujimori Y."/>
            <person name="Komiyama M."/>
            <person name="Tashiro H."/>
            <person name="Tanigami A."/>
            <person name="Fujiwara T."/>
            <person name="Ono T."/>
            <person name="Yamada K."/>
            <person name="Fujii Y."/>
            <person name="Ozaki K."/>
            <person name="Hirao M."/>
            <person name="Ohmori Y."/>
            <person name="Kawabata A."/>
            <person name="Hikiji T."/>
            <person name="Kobatake N."/>
            <person name="Inagaki H."/>
            <person name="Ikema Y."/>
            <person name="Okamoto S."/>
            <person name="Okitani R."/>
            <person name="Kawakami T."/>
            <person name="Noguchi S."/>
            <person name="Itoh T."/>
            <person name="Shigeta K."/>
            <person name="Senba T."/>
            <person name="Matsumura K."/>
            <person name="Nakajima Y."/>
            <person name="Mizuno T."/>
            <person name="Morinaga M."/>
            <person name="Sasaki M."/>
            <person name="Togashi T."/>
            <person name="Oyama M."/>
            <person name="Hata H."/>
            <person name="Watanabe M."/>
            <person name="Komatsu T."/>
            <person name="Mizushima-Sugano J."/>
            <person name="Satoh T."/>
            <person name="Shirai Y."/>
            <person name="Takahashi Y."/>
            <person name="Nakagawa K."/>
            <person name="Okumura K."/>
            <person name="Nagase T."/>
            <person name="Nomura N."/>
            <person name="Kikuchi H."/>
            <person name="Masuho Y."/>
            <person name="Yamashita R."/>
            <person name="Nakai K."/>
            <person name="Yada T."/>
            <person name="Nakamura Y."/>
            <person name="Ohara O."/>
            <person name="Isogai T."/>
            <person name="Sugano S."/>
        </authorList>
    </citation>
    <scope>NUCLEOTIDE SEQUENCE [LARGE SCALE MRNA] (ISOFORMS 1 AND 2)</scope>
    <scope>VARIANTS PRO-302 AND SER-320</scope>
    <source>
        <tissue>Hepatoma</tissue>
    </source>
</reference>
<reference key="3">
    <citation type="submission" date="2007-10" db="EMBL/GenBank/DDBJ databases">
        <title>NEDO human cDNA sequencing project focused on splicing variants.</title>
        <authorList>
            <person name="Wakamatsu A."/>
            <person name="Yamamoto J."/>
            <person name="Kimura K."/>
            <person name="Ishii S."/>
            <person name="Watanabe K."/>
            <person name="Sugiyama A."/>
            <person name="Murakawa K."/>
            <person name="Kaida T."/>
            <person name="Tsuchiya K."/>
            <person name="Fukuzumi Y."/>
            <person name="Kumagai A."/>
            <person name="Oishi Y."/>
            <person name="Yamamoto S."/>
            <person name="Ono Y."/>
            <person name="Komori Y."/>
            <person name="Yamazaki M."/>
            <person name="Kisu Y."/>
            <person name="Nishikawa T."/>
            <person name="Sugano S."/>
            <person name="Nomura N."/>
            <person name="Isogai T."/>
        </authorList>
    </citation>
    <scope>NUCLEOTIDE SEQUENCE [LARGE SCALE MRNA] (ISOFORM 1)</scope>
    <source>
        <tissue>Small intestine</tissue>
    </source>
</reference>
<reference key="4">
    <citation type="journal article" date="2004" name="Nature">
        <title>The DNA sequence and comparative analysis of human chromosome 10.</title>
        <authorList>
            <person name="Deloukas P."/>
            <person name="Earthrowl M.E."/>
            <person name="Grafham D.V."/>
            <person name="Rubenfield M."/>
            <person name="French L."/>
            <person name="Steward C.A."/>
            <person name="Sims S.K."/>
            <person name="Jones M.C."/>
            <person name="Searle S."/>
            <person name="Scott C."/>
            <person name="Howe K."/>
            <person name="Hunt S.E."/>
            <person name="Andrews T.D."/>
            <person name="Gilbert J.G.R."/>
            <person name="Swarbreck D."/>
            <person name="Ashurst J.L."/>
            <person name="Taylor A."/>
            <person name="Battles J."/>
            <person name="Bird C.P."/>
            <person name="Ainscough R."/>
            <person name="Almeida J.P."/>
            <person name="Ashwell R.I.S."/>
            <person name="Ambrose K.D."/>
            <person name="Babbage A.K."/>
            <person name="Bagguley C.L."/>
            <person name="Bailey J."/>
            <person name="Banerjee R."/>
            <person name="Bates K."/>
            <person name="Beasley H."/>
            <person name="Bray-Allen S."/>
            <person name="Brown A.J."/>
            <person name="Brown J.Y."/>
            <person name="Burford D.C."/>
            <person name="Burrill W."/>
            <person name="Burton J."/>
            <person name="Cahill P."/>
            <person name="Camire D."/>
            <person name="Carter N.P."/>
            <person name="Chapman J.C."/>
            <person name="Clark S.Y."/>
            <person name="Clarke G."/>
            <person name="Clee C.M."/>
            <person name="Clegg S."/>
            <person name="Corby N."/>
            <person name="Coulson A."/>
            <person name="Dhami P."/>
            <person name="Dutta I."/>
            <person name="Dunn M."/>
            <person name="Faulkner L."/>
            <person name="Frankish A."/>
            <person name="Frankland J.A."/>
            <person name="Garner P."/>
            <person name="Garnett J."/>
            <person name="Gribble S."/>
            <person name="Griffiths C."/>
            <person name="Grocock R."/>
            <person name="Gustafson E."/>
            <person name="Hammond S."/>
            <person name="Harley J.L."/>
            <person name="Hart E."/>
            <person name="Heath P.D."/>
            <person name="Ho T.P."/>
            <person name="Hopkins B."/>
            <person name="Horne J."/>
            <person name="Howden P.J."/>
            <person name="Huckle E."/>
            <person name="Hynds C."/>
            <person name="Johnson C."/>
            <person name="Johnson D."/>
            <person name="Kana A."/>
            <person name="Kay M."/>
            <person name="Kimberley A.M."/>
            <person name="Kershaw J.K."/>
            <person name="Kokkinaki M."/>
            <person name="Laird G.K."/>
            <person name="Lawlor S."/>
            <person name="Lee H.M."/>
            <person name="Leongamornlert D.A."/>
            <person name="Laird G."/>
            <person name="Lloyd C."/>
            <person name="Lloyd D.M."/>
            <person name="Loveland J."/>
            <person name="Lovell J."/>
            <person name="McLaren S."/>
            <person name="McLay K.E."/>
            <person name="McMurray A."/>
            <person name="Mashreghi-Mohammadi M."/>
            <person name="Matthews L."/>
            <person name="Milne S."/>
            <person name="Nickerson T."/>
            <person name="Nguyen M."/>
            <person name="Overton-Larty E."/>
            <person name="Palmer S.A."/>
            <person name="Pearce A.V."/>
            <person name="Peck A.I."/>
            <person name="Pelan S."/>
            <person name="Phillimore B."/>
            <person name="Porter K."/>
            <person name="Rice C.M."/>
            <person name="Rogosin A."/>
            <person name="Ross M.T."/>
            <person name="Sarafidou T."/>
            <person name="Sehra H.K."/>
            <person name="Shownkeen R."/>
            <person name="Skuce C.D."/>
            <person name="Smith M."/>
            <person name="Standring L."/>
            <person name="Sycamore N."/>
            <person name="Tester J."/>
            <person name="Thorpe A."/>
            <person name="Torcasso W."/>
            <person name="Tracey A."/>
            <person name="Tromans A."/>
            <person name="Tsolas J."/>
            <person name="Wall M."/>
            <person name="Walsh J."/>
            <person name="Wang H."/>
            <person name="Weinstock K."/>
            <person name="West A.P."/>
            <person name="Willey D.L."/>
            <person name="Whitehead S.L."/>
            <person name="Wilming L."/>
            <person name="Wray P.W."/>
            <person name="Young L."/>
            <person name="Chen Y."/>
            <person name="Lovering R.C."/>
            <person name="Moschonas N.K."/>
            <person name="Siebert R."/>
            <person name="Fechtel K."/>
            <person name="Bentley D."/>
            <person name="Durbin R.M."/>
            <person name="Hubbard T."/>
            <person name="Doucette-Stamm L."/>
            <person name="Beck S."/>
            <person name="Smith D.R."/>
            <person name="Rogers J."/>
        </authorList>
    </citation>
    <scope>NUCLEOTIDE SEQUENCE [LARGE SCALE GENOMIC DNA]</scope>
</reference>
<reference key="5">
    <citation type="submission" date="2005-07" db="EMBL/GenBank/DDBJ databases">
        <authorList>
            <person name="Mural R.J."/>
            <person name="Istrail S."/>
            <person name="Sutton G.G."/>
            <person name="Florea L."/>
            <person name="Halpern A.L."/>
            <person name="Mobarry C.M."/>
            <person name="Lippert R."/>
            <person name="Walenz B."/>
            <person name="Shatkay H."/>
            <person name="Dew I."/>
            <person name="Miller J.R."/>
            <person name="Flanigan M.J."/>
            <person name="Edwards N.J."/>
            <person name="Bolanos R."/>
            <person name="Fasulo D."/>
            <person name="Halldorsson B.V."/>
            <person name="Hannenhalli S."/>
            <person name="Turner R."/>
            <person name="Yooseph S."/>
            <person name="Lu F."/>
            <person name="Nusskern D.R."/>
            <person name="Shue B.C."/>
            <person name="Zheng X.H."/>
            <person name="Zhong F."/>
            <person name="Delcher A.L."/>
            <person name="Huson D.H."/>
            <person name="Kravitz S.A."/>
            <person name="Mouchard L."/>
            <person name="Reinert K."/>
            <person name="Remington K.A."/>
            <person name="Clark A.G."/>
            <person name="Waterman M.S."/>
            <person name="Eichler E.E."/>
            <person name="Adams M.D."/>
            <person name="Hunkapiller M.W."/>
            <person name="Myers E.W."/>
            <person name="Venter J.C."/>
        </authorList>
    </citation>
    <scope>NUCLEOTIDE SEQUENCE [LARGE SCALE GENOMIC DNA]</scope>
</reference>
<reference key="6">
    <citation type="journal article" date="2004" name="Genome Res.">
        <title>The status, quality, and expansion of the NIH full-length cDNA project: the Mammalian Gene Collection (MGC).</title>
        <authorList>
            <consortium name="The MGC Project Team"/>
        </authorList>
    </citation>
    <scope>NUCLEOTIDE SEQUENCE [LARGE SCALE MRNA] (ISOFORM 1)</scope>
</reference>
<reference key="7">
    <citation type="journal article" date="2013" name="J. Proteome Res.">
        <title>Toward a comprehensive characterization of a human cancer cell phosphoproteome.</title>
        <authorList>
            <person name="Zhou H."/>
            <person name="Di Palma S."/>
            <person name="Preisinger C."/>
            <person name="Peng M."/>
            <person name="Polat A.N."/>
            <person name="Heck A.J."/>
            <person name="Mohammed S."/>
        </authorList>
    </citation>
    <scope>PHOSPHORYLATION [LARGE SCALE ANALYSIS] AT SER-173</scope>
    <scope>IDENTIFICATION BY MASS SPECTROMETRY [LARGE SCALE ANALYSIS]</scope>
    <source>
        <tissue>Erythroleukemia</tissue>
    </source>
</reference>
<protein>
    <recommendedName>
        <fullName>WW domain binding protein 1-like</fullName>
    </recommendedName>
    <alternativeName>
        <fullName>Outcome predictor in acute leukemia 1</fullName>
    </alternativeName>
</protein>
<keyword id="KW-0025">Alternative splicing</keyword>
<keyword id="KW-0472">Membrane</keyword>
<keyword id="KW-0597">Phosphoprotein</keyword>
<keyword id="KW-1267">Proteomics identification</keyword>
<keyword id="KW-1185">Reference proteome</keyword>
<keyword id="KW-0812">Transmembrane</keyword>
<keyword id="KW-1133">Transmembrane helix</keyword>
<sequence>MPFLLGLRQDKEACVGTNNQSYICDTGHCCGQSQCCNYYYELWWFWLVWTIIIILSCCCVCHHRRAKHRLQAQQRQHEINLIAYREAHNYSALPFYFRFLPNYLLPPYEEVVNRPPTPPPPYSAFQLQQQQLLPPQCGPAGGSPPGIDPTRGSQGAQSSPLSEPSRSSTRPPSIADPDPSDLPVDRAATKAPGMEPSGSVAGLGELDPGAFLDKDAECREELLKDDSSEHGAPDSKEKTPGRHRRFTGDSGIEVCVCNRGHHDDDLKEFNTLIDDALDGPLDFCDSCHVRPPGDEEEGLCQSSEEQAREPGHPHLPRPPACLLLNTINEQDSPNSQSSSSPS</sequence>
<accession>Q9NX94</accession>
<accession>B3KPF4</accession>
<accession>B7Z6S7</accession>
<accession>D3DR90</accession>
<accession>Q1EG70</accession>
<accession>Q2HIY7</accession>
<accession>Q5F2G6</accession>
<evidence type="ECO:0000255" key="1"/>
<evidence type="ECO:0000256" key="2">
    <source>
        <dbReference type="SAM" id="MobiDB-lite"/>
    </source>
</evidence>
<evidence type="ECO:0000269" key="3">
    <source>
    </source>
</evidence>
<evidence type="ECO:0000303" key="4">
    <source>
    </source>
</evidence>
<evidence type="ECO:0000305" key="5"/>
<evidence type="ECO:0007744" key="6">
    <source>
    </source>
</evidence>
<gene>
    <name type="primary">WBP1L</name>
    <name type="synonym">C10orf26</name>
    <name type="synonym">OPA1L</name>
</gene>
<feature type="chain" id="PRO_0000241450" description="WW domain binding protein 1-like">
    <location>
        <begin position="1"/>
        <end position="342"/>
    </location>
</feature>
<feature type="transmembrane region" description="Helical" evidence="1">
    <location>
        <begin position="42"/>
        <end position="62"/>
    </location>
</feature>
<feature type="region of interest" description="Disordered" evidence="2">
    <location>
        <begin position="133"/>
        <end position="247"/>
    </location>
</feature>
<feature type="region of interest" description="Disordered" evidence="2">
    <location>
        <begin position="292"/>
        <end position="320"/>
    </location>
</feature>
<feature type="compositionally biased region" description="Low complexity" evidence="2">
    <location>
        <begin position="158"/>
        <end position="173"/>
    </location>
</feature>
<feature type="compositionally biased region" description="Basic and acidic residues" evidence="2">
    <location>
        <begin position="212"/>
        <end position="240"/>
    </location>
</feature>
<feature type="modified residue" description="Phosphoserine" evidence="6">
    <location>
        <position position="173"/>
    </location>
</feature>
<feature type="splice variant" id="VSP_041670" description="In isoform 2." evidence="4">
    <original>MPFLLGLR</original>
    <variation>MERRRLLGGMALLLLQALPSPLSARAEPP</variation>
    <location>
        <begin position="1"/>
        <end position="8"/>
    </location>
</feature>
<feature type="sequence variant" id="VAR_026839" description="In dbSNP:rs284860." evidence="3">
    <original>S</original>
    <variation>P</variation>
    <location>
        <position position="302"/>
    </location>
</feature>
<feature type="sequence variant" id="VAR_026840" description="In dbSNP:rs284859." evidence="3">
    <original>A</original>
    <variation>S</variation>
    <location>
        <position position="320"/>
    </location>
</feature>
<feature type="sequence conflict" description="In Ref. 6; AAI13858." evidence="5" ref="6">
    <original>Y</original>
    <variation>H</variation>
    <location>
        <position position="90"/>
    </location>
</feature>
<name>WBP1L_HUMAN</name>
<dbReference type="EMBL" id="AY656171">
    <property type="protein sequence ID" value="AAV68559.1"/>
    <property type="molecule type" value="mRNA"/>
</dbReference>
<dbReference type="EMBL" id="AK000374">
    <property type="protein sequence ID" value="BAA91122.1"/>
    <property type="status" value="ALT_INIT"/>
    <property type="molecule type" value="mRNA"/>
</dbReference>
<dbReference type="EMBL" id="AK316452">
    <property type="protein sequence ID" value="BAH14823.1"/>
    <property type="molecule type" value="mRNA"/>
</dbReference>
<dbReference type="EMBL" id="AK056285">
    <property type="protein sequence ID" value="BAG51666.1"/>
    <property type="molecule type" value="mRNA"/>
</dbReference>
<dbReference type="EMBL" id="AK300871">
    <property type="protein sequence ID" value="BAH13363.1"/>
    <property type="molecule type" value="mRNA"/>
</dbReference>
<dbReference type="EMBL" id="AL358790">
    <property type="status" value="NOT_ANNOTATED_CDS"/>
    <property type="molecule type" value="Genomic_DNA"/>
</dbReference>
<dbReference type="EMBL" id="CH471066">
    <property type="protein sequence ID" value="EAW49673.1"/>
    <property type="molecule type" value="Genomic_DNA"/>
</dbReference>
<dbReference type="EMBL" id="CH471066">
    <property type="protein sequence ID" value="EAW49674.1"/>
    <property type="molecule type" value="Genomic_DNA"/>
</dbReference>
<dbReference type="EMBL" id="BC113857">
    <property type="protein sequence ID" value="AAI13858.1"/>
    <property type="molecule type" value="mRNA"/>
</dbReference>
<dbReference type="EMBL" id="BC114465">
    <property type="protein sequence ID" value="AAI14466.1"/>
    <property type="molecule type" value="mRNA"/>
</dbReference>
<dbReference type="CCDS" id="CCDS44473.1">
    <molecule id="Q9NX94-2"/>
</dbReference>
<dbReference type="CCDS" id="CCDS7540.1">
    <molecule id="Q9NX94-1"/>
</dbReference>
<dbReference type="RefSeq" id="NP_001077382.1">
    <molecule id="Q9NX94-2"/>
    <property type="nucleotide sequence ID" value="NM_001083913.2"/>
</dbReference>
<dbReference type="RefSeq" id="NP_060257.4">
    <molecule id="Q9NX94-1"/>
    <property type="nucleotide sequence ID" value="NM_017787.4"/>
</dbReference>
<dbReference type="BioGRID" id="120189">
    <property type="interactions" value="8"/>
</dbReference>
<dbReference type="FunCoup" id="Q9NX94">
    <property type="interactions" value="372"/>
</dbReference>
<dbReference type="IntAct" id="Q9NX94">
    <property type="interactions" value="22"/>
</dbReference>
<dbReference type="STRING" id="9606.ENSP00000414721"/>
<dbReference type="GlyGen" id="Q9NX94">
    <property type="glycosylation" value="1 site"/>
</dbReference>
<dbReference type="iPTMnet" id="Q9NX94"/>
<dbReference type="PhosphoSitePlus" id="Q9NX94"/>
<dbReference type="SwissPalm" id="Q9NX94"/>
<dbReference type="BioMuta" id="WBP1L"/>
<dbReference type="DMDM" id="109820639"/>
<dbReference type="jPOST" id="Q9NX94"/>
<dbReference type="MassIVE" id="Q9NX94"/>
<dbReference type="PaxDb" id="9606-ENSP00000414721"/>
<dbReference type="PeptideAtlas" id="Q9NX94"/>
<dbReference type="ProteomicsDB" id="83057">
    <molecule id="Q9NX94-1"/>
</dbReference>
<dbReference type="ProteomicsDB" id="83058">
    <molecule id="Q9NX94-2"/>
</dbReference>
<dbReference type="Antibodypedia" id="48471">
    <property type="antibodies" value="71 antibodies from 15 providers"/>
</dbReference>
<dbReference type="DNASU" id="54838"/>
<dbReference type="Ensembl" id="ENST00000369889.5">
    <molecule id="Q9NX94-1"/>
    <property type="protein sequence ID" value="ENSP00000358905.4"/>
    <property type="gene ID" value="ENSG00000166272.18"/>
</dbReference>
<dbReference type="Ensembl" id="ENST00000448841.7">
    <molecule id="Q9NX94-2"/>
    <property type="protein sequence ID" value="ENSP00000414721.1"/>
    <property type="gene ID" value="ENSG00000166272.18"/>
</dbReference>
<dbReference type="GeneID" id="54838"/>
<dbReference type="KEGG" id="hsa:54838"/>
<dbReference type="MANE-Select" id="ENST00000448841.7">
    <molecule id="Q9NX94-2"/>
    <property type="protein sequence ID" value="ENSP00000414721.1"/>
    <property type="RefSeq nucleotide sequence ID" value="NM_001083913.2"/>
    <property type="RefSeq protein sequence ID" value="NP_001077382.1"/>
</dbReference>
<dbReference type="UCSC" id="uc001kwe.5">
    <molecule id="Q9NX94-1"/>
    <property type="organism name" value="human"/>
</dbReference>
<dbReference type="AGR" id="HGNC:23510"/>
<dbReference type="CTD" id="54838"/>
<dbReference type="DisGeNET" id="54838"/>
<dbReference type="GeneCards" id="WBP1L"/>
<dbReference type="HGNC" id="HGNC:23510">
    <property type="gene designation" value="WBP1L"/>
</dbReference>
<dbReference type="HPA" id="ENSG00000166272">
    <property type="expression patterns" value="Low tissue specificity"/>
</dbReference>
<dbReference type="MIM" id="611129">
    <property type="type" value="gene"/>
</dbReference>
<dbReference type="neXtProt" id="NX_Q9NX94"/>
<dbReference type="OpenTargets" id="ENSG00000166272"/>
<dbReference type="PharmGKB" id="PA128394674"/>
<dbReference type="VEuPathDB" id="HostDB:ENSG00000166272"/>
<dbReference type="eggNOG" id="ENOG502QQBJ">
    <property type="taxonomic scope" value="Eukaryota"/>
</dbReference>
<dbReference type="GeneTree" id="ENSGT00950000183109"/>
<dbReference type="HOGENOM" id="CLU_046863_0_0_1"/>
<dbReference type="InParanoid" id="Q9NX94"/>
<dbReference type="OMA" id="CSGLKMG"/>
<dbReference type="OrthoDB" id="10070083at2759"/>
<dbReference type="PAN-GO" id="Q9NX94">
    <property type="GO annotations" value="0 GO annotations based on evolutionary models"/>
</dbReference>
<dbReference type="PhylomeDB" id="Q9NX94"/>
<dbReference type="TreeFam" id="TF330726"/>
<dbReference type="PathwayCommons" id="Q9NX94"/>
<dbReference type="SignaLink" id="Q9NX94"/>
<dbReference type="BioGRID-ORCS" id="54838">
    <property type="hits" value="184 hits in 1168 CRISPR screens"/>
</dbReference>
<dbReference type="ChiTaRS" id="WBP1L">
    <property type="organism name" value="human"/>
</dbReference>
<dbReference type="GeneWiki" id="C10orf26"/>
<dbReference type="GenomeRNAi" id="54838"/>
<dbReference type="Pharos" id="Q9NX94">
    <property type="development level" value="Tdark"/>
</dbReference>
<dbReference type="PRO" id="PR:Q9NX94"/>
<dbReference type="Proteomes" id="UP000005640">
    <property type="component" value="Chromosome 10"/>
</dbReference>
<dbReference type="RNAct" id="Q9NX94">
    <property type="molecule type" value="protein"/>
</dbReference>
<dbReference type="Bgee" id="ENSG00000166272">
    <property type="expression patterns" value="Expressed in tendon of biceps brachii and 202 other cell types or tissues"/>
</dbReference>
<dbReference type="ExpressionAtlas" id="Q9NX94">
    <property type="expression patterns" value="baseline and differential"/>
</dbReference>
<dbReference type="GO" id="GO:0016020">
    <property type="term" value="C:membrane"/>
    <property type="evidence" value="ECO:0007669"/>
    <property type="project" value="UniProtKB-SubCell"/>
</dbReference>
<dbReference type="GO" id="GO:0031625">
    <property type="term" value="F:ubiquitin protein ligase binding"/>
    <property type="evidence" value="ECO:0007669"/>
    <property type="project" value="Ensembl"/>
</dbReference>
<dbReference type="GO" id="GO:0038160">
    <property type="term" value="P:CXCL12-activated CXCR4 signaling pathway"/>
    <property type="evidence" value="ECO:0000318"/>
    <property type="project" value="GO_Central"/>
</dbReference>
<dbReference type="GO" id="GO:0030097">
    <property type="term" value="P:hemopoiesis"/>
    <property type="evidence" value="ECO:0007669"/>
    <property type="project" value="Ensembl"/>
</dbReference>
<dbReference type="GO" id="GO:0031398">
    <property type="term" value="P:positive regulation of protein ubiquitination"/>
    <property type="evidence" value="ECO:0007669"/>
    <property type="project" value="Ensembl"/>
</dbReference>
<dbReference type="InterPro" id="IPR021684">
    <property type="entry name" value="WBP1-like"/>
</dbReference>
<dbReference type="InterPro" id="IPR051994">
    <property type="entry name" value="WW_domain-binding"/>
</dbReference>
<dbReference type="PANTHER" id="PTHR16209">
    <property type="entry name" value="VESICULAR, OVEREXPRESSED IN CANCER, PROSURVIVAL PROTEIN 1"/>
    <property type="match status" value="1"/>
</dbReference>
<dbReference type="PANTHER" id="PTHR16209:SF4">
    <property type="entry name" value="WW DOMAIN BINDING PROTEIN 1-LIKE"/>
    <property type="match status" value="1"/>
</dbReference>
<dbReference type="Pfam" id="PF11669">
    <property type="entry name" value="WBP-1"/>
    <property type="match status" value="1"/>
</dbReference>
<comment type="interaction">
    <interactant intactId="EBI-10316321">
        <id>Q9NX94</id>
    </interactant>
    <interactant intactId="EBI-348517">
        <id>O95870</id>
        <label>ABHD16A</label>
    </interactant>
    <organismsDiffer>false</organismsDiffer>
    <experiments>3</experiments>
</comment>
<comment type="interaction">
    <interactant intactId="EBI-10316321">
        <id>Q9NX94</id>
    </interactant>
    <interactant intactId="EBI-718729">
        <id>P55212</id>
        <label>CASP6</label>
    </interactant>
    <organismsDiffer>false</organismsDiffer>
    <experiments>3</experiments>
</comment>
<comment type="interaction">
    <interactant intactId="EBI-10316321">
        <id>Q9NX94</id>
    </interactant>
    <interactant intactId="EBI-6624398">
        <id>P06307</id>
        <label>CCK</label>
    </interactant>
    <organismsDiffer>false</organismsDiffer>
    <experiments>3</experiments>
</comment>
<comment type="interaction">
    <interactant intactId="EBI-10316321">
        <id>Q9NX94</id>
    </interactant>
    <interactant intactId="EBI-6875961">
        <id>P02489</id>
        <label>CRYAA</label>
    </interactant>
    <organismsDiffer>false</organismsDiffer>
    <experiments>3</experiments>
</comment>
<comment type="interaction">
    <interactant intactId="EBI-10316321">
        <id>Q9NX94</id>
    </interactant>
    <interactant intactId="EBI-356015">
        <id>Q14204</id>
        <label>DYNC1H1</label>
    </interactant>
    <organismsDiffer>false</organismsDiffer>
    <experiments>3</experiments>
</comment>
<comment type="interaction">
    <interactant intactId="EBI-10316321">
        <id>Q9NX94</id>
    </interactant>
    <interactant intactId="EBI-1054228">
        <id>P41091</id>
        <label>EIF2S3</label>
    </interactant>
    <organismsDiffer>false</organismsDiffer>
    <experiments>3</experiments>
</comment>
<comment type="interaction">
    <interactant intactId="EBI-10316321">
        <id>Q9NX94</id>
    </interactant>
    <interactant intactId="EBI-12135243">
        <id>O95208-2</id>
        <label>EPN2</label>
    </interactant>
    <organismsDiffer>false</organismsDiffer>
    <experiments>3</experiments>
</comment>
<comment type="interaction">
    <interactant intactId="EBI-10316321">
        <id>Q9NX94</id>
    </interactant>
    <interactant intactId="EBI-25852368">
        <id>O75460-2</id>
        <label>ERN1</label>
    </interactant>
    <organismsDiffer>false</organismsDiffer>
    <experiments>3</experiments>
</comment>
<comment type="interaction">
    <interactant intactId="EBI-10316321">
        <id>Q9NX94</id>
    </interactant>
    <interactant intactId="EBI-348399">
        <id>P22607</id>
        <label>FGFR3</label>
    </interactant>
    <organismsDiffer>false</organismsDiffer>
    <experiments>3</experiments>
</comment>
<comment type="interaction">
    <interactant intactId="EBI-10316321">
        <id>Q9NX94</id>
    </interactant>
    <interactant intactId="EBI-10226858">
        <id>Q0VDC6</id>
        <label>FKBP1A</label>
    </interactant>
    <organismsDiffer>false</organismsDiffer>
    <experiments>3</experiments>
</comment>
<comment type="interaction">
    <interactant intactId="EBI-10316321">
        <id>Q9NX94</id>
    </interactant>
    <interactant intactId="EBI-9641086">
        <id>P21333-2</id>
        <label>FLNA</label>
    </interactant>
    <organismsDiffer>false</organismsDiffer>
    <experiments>3</experiments>
</comment>
<comment type="interaction">
    <interactant intactId="EBI-10316321">
        <id>Q9NX94</id>
    </interactant>
    <interactant intactId="EBI-8285963">
        <id>Q14957</id>
        <label>GRIN2C</label>
    </interactant>
    <organismsDiffer>false</organismsDiffer>
    <experiments>3</experiments>
</comment>
<comment type="interaction">
    <interactant intactId="EBI-10316321">
        <id>Q9NX94</id>
    </interactant>
    <interactant intactId="EBI-351506">
        <id>P06396</id>
        <label>GSN</label>
    </interactant>
    <organismsDiffer>false</organismsDiffer>
    <experiments>3</experiments>
</comment>
<comment type="interaction">
    <interactant intactId="EBI-10316321">
        <id>Q9NX94</id>
    </interactant>
    <interactant intactId="EBI-356991">
        <id>P54652</id>
        <label>HSPA2</label>
    </interactant>
    <organismsDiffer>false</organismsDiffer>
    <experiments>3</experiments>
</comment>
<comment type="interaction">
    <interactant intactId="EBI-10316321">
        <id>Q9NX94</id>
    </interactant>
    <interactant intactId="EBI-21591415">
        <id>P13473-2</id>
        <label>LAMP2</label>
    </interactant>
    <organismsDiffer>false</organismsDiffer>
    <experiments>3</experiments>
</comment>
<comment type="interaction">
    <interactant intactId="EBI-10316321">
        <id>Q9NX94</id>
    </interactant>
    <interactant intactId="EBI-473160">
        <id>Q8N2W9</id>
        <label>PIAS4</label>
    </interactant>
    <organismsDiffer>false</organismsDiffer>
    <experiments>3</experiments>
</comment>
<comment type="interaction">
    <interactant intactId="EBI-10316321">
        <id>Q9NX94</id>
    </interactant>
    <interactant intactId="EBI-5280197">
        <id>O75400-2</id>
        <label>PRPF40A</label>
    </interactant>
    <organismsDiffer>false</organismsDiffer>
    <experiments>3</experiments>
</comment>
<comment type="interaction">
    <interactant intactId="EBI-10316321">
        <id>Q9NX94</id>
    </interactant>
    <interactant intactId="EBI-286642">
        <id>P62826</id>
        <label>RAN</label>
    </interactant>
    <organismsDiffer>false</organismsDiffer>
    <experiments>3</experiments>
</comment>
<comment type="interaction">
    <interactant intactId="EBI-10316321">
        <id>Q9NX94</id>
    </interactant>
    <interactant intactId="EBI-1053431">
        <id>P49591</id>
        <label>SARS1</label>
    </interactant>
    <organismsDiffer>false</organismsDiffer>
    <experiments>3</experiments>
</comment>
<comment type="interaction">
    <interactant intactId="EBI-10316321">
        <id>Q9NX94</id>
    </interactant>
    <interactant intactId="EBI-347996">
        <id>O43765</id>
        <label>SGTA</label>
    </interactant>
    <organismsDiffer>false</organismsDiffer>
    <experiments>3</experiments>
</comment>
<comment type="interaction">
    <interactant intactId="EBI-10316321">
        <id>Q9NX94</id>
    </interactant>
    <interactant intactId="EBI-741480">
        <id>Q9UMX0</id>
        <label>UBQLN1</label>
    </interactant>
    <organismsDiffer>false</organismsDiffer>
    <experiments>3</experiments>
</comment>
<comment type="interaction">
    <interactant intactId="EBI-10316321">
        <id>Q9NX94</id>
    </interactant>
    <interactant intactId="EBI-25900580">
        <id>Q9Y649</id>
    </interactant>
    <organismsDiffer>false</organismsDiffer>
    <experiments>3</experiments>
</comment>
<comment type="subcellular location">
    <subcellularLocation>
        <location evidence="5">Membrane</location>
        <topology evidence="5">Single-pass membrane protein</topology>
    </subcellularLocation>
</comment>
<comment type="alternative products">
    <event type="alternative splicing"/>
    <isoform>
        <id>Q9NX94-1</id>
        <name>1</name>
        <sequence type="displayed"/>
    </isoform>
    <isoform>
        <id>Q9NX94-2</id>
        <name>2</name>
        <sequence type="described" ref="VSP_041670"/>
    </isoform>
</comment>
<comment type="sequence caution" evidence="5">
    <conflict type="erroneous initiation">
        <sequence resource="EMBL-CDS" id="BAA91122"/>
    </conflict>
    <text>Truncated N-terminus.</text>
</comment>
<proteinExistence type="evidence at protein level"/>